<evidence type="ECO:0000255" key="1">
    <source>
        <dbReference type="HAMAP-Rule" id="MF_02206"/>
    </source>
</evidence>
<keyword id="KW-0067">ATP-binding</keyword>
<keyword id="KW-0269">Exonuclease</keyword>
<keyword id="KW-0378">Hydrolase</keyword>
<keyword id="KW-0540">Nuclease</keyword>
<keyword id="KW-0547">Nucleotide-binding</keyword>
<protein>
    <recommendedName>
        <fullName evidence="1">3'-5' exonuclease DinG</fullName>
        <ecNumber evidence="1">3.1.-.-</ecNumber>
    </recommendedName>
</protein>
<comment type="function">
    <text evidence="1">3'-5' exonuclease.</text>
</comment>
<comment type="similarity">
    <text evidence="1">Belongs to the helicase family. DinG subfamily. Type 2 sub-subfamily.</text>
</comment>
<sequence length="897" mass="104218">MGMATYAVVDLETTGNQLDFDDIIQIGITFVRNNQIIDTYHSMIRTNLEIPPFIQALTSIEENMLQQAPYFNQVAQEIYDKIKDCIFVAHNVDFDLNFIKKAFKDCNIQYRPKKVIDTLEIFKIAFPTDKSYQLSELAEAHGITLANAHRADEDAATTAKLMILAFEKFEKLPLDTLKQLYYLSKQLKYDLYDIFFEMVRQYDAKPLDKSYEKFEQIIYRKQVDFKKPTTNYNGSLKSLYSKAVDQLGLTYRPQQLYLAETILDQLMHSEKAMIEASLGSGKSLAYLLAALMYNIETGKHVMISTNTKLLQSQLLEKDIPAMNEALNFKINALLIKSKSDYISLGLISQILKDDTSNYEVNILKMQLLIWITETPSGDIQELNLKGGQKMYFDQKIETYVPARHDVHYYNFIKRNAQNIQIGITNHAHLIHSDVENSIYQLFDDCIVDEAHRLPDYALNQVTNELSYADIKYQLGLIGKNENEKLLKAIDQLEKQRILEKLDIAPIDIFGLKASMNEIHELNEQLFSTIFTIINDSDVYDDDIHRFHNVFTFETKDILKDLHAIIDKLNKTLEIFNGISHKTVKSLRKQLLYLKDKFKNIEQSLKAGHTSFISIKNLSQKSTIRLYVKDYAVKDVLTKQVLEKFKSLIFISGTLKFNHSFEAFKQLFNKDVHFNTFEVNTSLQSAKNTSVFIPSDVASYQYKNIDEYVASIVSYIIEYTTITSSKCLVLFTSYKMMHMVQDMLNELPEFEDYVVLTQQQNQNYKIVQQFNNFDKAILLGTSTFFEGFDFQANGIKCVMIAKLPFMNKHNAKYWLMDSEFTSTFKEYVLPDAVTRFRQGLGRLIRNENDRGIIVSFDDRLINSNYKNFFEQTLENYRQKKGDIQQFGKLLRQIQKKKK</sequence>
<feature type="chain" id="PRO_0000277598" description="3'-5' exonuclease DinG">
    <location>
        <begin position="1"/>
        <end position="897"/>
    </location>
</feature>
<feature type="domain" description="Exonuclease" evidence="1">
    <location>
        <begin position="8"/>
        <end position="161"/>
    </location>
</feature>
<feature type="domain" description="Helicase ATP-binding" evidence="1">
    <location>
        <begin position="241"/>
        <end position="496"/>
    </location>
</feature>
<feature type="domain" description="Helicase C-terminal" evidence="1">
    <location>
        <begin position="703"/>
        <end position="893"/>
    </location>
</feature>
<feature type="short sequence motif" description="DEAH box" evidence="1">
    <location>
        <begin position="448"/>
        <end position="451"/>
    </location>
</feature>
<feature type="binding site" evidence="1">
    <location>
        <begin position="276"/>
        <end position="283"/>
    </location>
    <ligand>
        <name>ATP</name>
        <dbReference type="ChEBI" id="CHEBI:30616"/>
    </ligand>
</feature>
<organism>
    <name type="scientific">Staphylococcus aureus (strain N315)</name>
    <dbReference type="NCBI Taxonomy" id="158879"/>
    <lineage>
        <taxon>Bacteria</taxon>
        <taxon>Bacillati</taxon>
        <taxon>Bacillota</taxon>
        <taxon>Bacilli</taxon>
        <taxon>Bacillales</taxon>
        <taxon>Staphylococcaceae</taxon>
        <taxon>Staphylococcus</taxon>
    </lineage>
</organism>
<dbReference type="EC" id="3.1.-.-" evidence="1"/>
<dbReference type="EMBL" id="BA000018">
    <property type="protein sequence ID" value="BAB42548.1"/>
    <property type="molecule type" value="Genomic_DNA"/>
</dbReference>
<dbReference type="PIR" id="G89923">
    <property type="entry name" value="G89923"/>
</dbReference>
<dbReference type="RefSeq" id="WP_000525078.1">
    <property type="nucleotide sequence ID" value="NC_002745.2"/>
</dbReference>
<dbReference type="SMR" id="Q7A5K4"/>
<dbReference type="EnsemblBacteria" id="BAB42548">
    <property type="protein sequence ID" value="BAB42548"/>
    <property type="gene ID" value="BAB42548"/>
</dbReference>
<dbReference type="KEGG" id="sau:SA1288"/>
<dbReference type="HOGENOM" id="CLU_012117_1_1_9"/>
<dbReference type="GO" id="GO:0005829">
    <property type="term" value="C:cytosol"/>
    <property type="evidence" value="ECO:0007669"/>
    <property type="project" value="TreeGrafter"/>
</dbReference>
<dbReference type="GO" id="GO:0008408">
    <property type="term" value="F:3'-5' exonuclease activity"/>
    <property type="evidence" value="ECO:0007669"/>
    <property type="project" value="UniProtKB-UniRule"/>
</dbReference>
<dbReference type="GO" id="GO:0005524">
    <property type="term" value="F:ATP binding"/>
    <property type="evidence" value="ECO:0007669"/>
    <property type="project" value="UniProtKB-UniRule"/>
</dbReference>
<dbReference type="GO" id="GO:0003677">
    <property type="term" value="F:DNA binding"/>
    <property type="evidence" value="ECO:0007669"/>
    <property type="project" value="InterPro"/>
</dbReference>
<dbReference type="GO" id="GO:0003887">
    <property type="term" value="F:DNA-directed DNA polymerase activity"/>
    <property type="evidence" value="ECO:0007669"/>
    <property type="project" value="InterPro"/>
</dbReference>
<dbReference type="GO" id="GO:0004386">
    <property type="term" value="F:helicase activity"/>
    <property type="evidence" value="ECO:0007669"/>
    <property type="project" value="InterPro"/>
</dbReference>
<dbReference type="GO" id="GO:0016818">
    <property type="term" value="F:hydrolase activity, acting on acid anhydrides, in phosphorus-containing anhydrides"/>
    <property type="evidence" value="ECO:0007669"/>
    <property type="project" value="InterPro"/>
</dbReference>
<dbReference type="GO" id="GO:0045004">
    <property type="term" value="P:DNA replication proofreading"/>
    <property type="evidence" value="ECO:0007669"/>
    <property type="project" value="TreeGrafter"/>
</dbReference>
<dbReference type="CDD" id="cd06127">
    <property type="entry name" value="DEDDh"/>
    <property type="match status" value="1"/>
</dbReference>
<dbReference type="FunFam" id="3.30.420.10:FF:000045">
    <property type="entry name" value="3'-5' exonuclease DinG"/>
    <property type="match status" value="1"/>
</dbReference>
<dbReference type="FunFam" id="3.40.50.300:FF:001816">
    <property type="entry name" value="3'-5' exonuclease DinG"/>
    <property type="match status" value="1"/>
</dbReference>
<dbReference type="FunFam" id="3.40.50.300:FF:000437">
    <property type="entry name" value="ATP-dependent DNA helicase DinG"/>
    <property type="match status" value="1"/>
</dbReference>
<dbReference type="Gene3D" id="3.40.50.300">
    <property type="entry name" value="P-loop containing nucleotide triphosphate hydrolases"/>
    <property type="match status" value="2"/>
</dbReference>
<dbReference type="Gene3D" id="3.30.420.10">
    <property type="entry name" value="Ribonuclease H-like superfamily/Ribonuclease H"/>
    <property type="match status" value="1"/>
</dbReference>
<dbReference type="HAMAP" id="MF_02206">
    <property type="entry name" value="DinG_exonucl"/>
    <property type="match status" value="1"/>
</dbReference>
<dbReference type="InterPro" id="IPR006555">
    <property type="entry name" value="ATP-dep_Helicase_C"/>
</dbReference>
<dbReference type="InterPro" id="IPR006310">
    <property type="entry name" value="DinG"/>
</dbReference>
<dbReference type="InterPro" id="IPR006054">
    <property type="entry name" value="DnaQ"/>
</dbReference>
<dbReference type="InterPro" id="IPR013520">
    <property type="entry name" value="Exonuclease_RNaseT/DNA_pol3"/>
</dbReference>
<dbReference type="InterPro" id="IPR014013">
    <property type="entry name" value="Helic_SF1/SF2_ATP-bd_DinG/Rad3"/>
</dbReference>
<dbReference type="InterPro" id="IPR027417">
    <property type="entry name" value="P-loop_NTPase"/>
</dbReference>
<dbReference type="InterPro" id="IPR012337">
    <property type="entry name" value="RNaseH-like_sf"/>
</dbReference>
<dbReference type="InterPro" id="IPR036397">
    <property type="entry name" value="RNaseH_sf"/>
</dbReference>
<dbReference type="NCBIfam" id="TIGR01407">
    <property type="entry name" value="dinG_rel"/>
    <property type="match status" value="1"/>
</dbReference>
<dbReference type="NCBIfam" id="TIGR00573">
    <property type="entry name" value="dnaq"/>
    <property type="match status" value="1"/>
</dbReference>
<dbReference type="PANTHER" id="PTHR30231">
    <property type="entry name" value="DNA POLYMERASE III SUBUNIT EPSILON"/>
    <property type="match status" value="1"/>
</dbReference>
<dbReference type="PANTHER" id="PTHR30231:SF41">
    <property type="entry name" value="DNA POLYMERASE III SUBUNIT EPSILON"/>
    <property type="match status" value="1"/>
</dbReference>
<dbReference type="Pfam" id="PF13307">
    <property type="entry name" value="Helicase_C_2"/>
    <property type="match status" value="1"/>
</dbReference>
<dbReference type="Pfam" id="PF00929">
    <property type="entry name" value="RNase_T"/>
    <property type="match status" value="1"/>
</dbReference>
<dbReference type="SMART" id="SM00479">
    <property type="entry name" value="EXOIII"/>
    <property type="match status" value="1"/>
</dbReference>
<dbReference type="SMART" id="SM00491">
    <property type="entry name" value="HELICc2"/>
    <property type="match status" value="1"/>
</dbReference>
<dbReference type="SUPFAM" id="SSF52540">
    <property type="entry name" value="P-loop containing nucleoside triphosphate hydrolases"/>
    <property type="match status" value="1"/>
</dbReference>
<dbReference type="SUPFAM" id="SSF53098">
    <property type="entry name" value="Ribonuclease H-like"/>
    <property type="match status" value="1"/>
</dbReference>
<dbReference type="PROSITE" id="PS51193">
    <property type="entry name" value="HELICASE_ATP_BIND_2"/>
    <property type="match status" value="1"/>
</dbReference>
<dbReference type="PROSITE" id="PS51194">
    <property type="entry name" value="HELICASE_CTER"/>
    <property type="match status" value="1"/>
</dbReference>
<name>DING_STAAN</name>
<accession>Q7A5K4</accession>
<reference key="1">
    <citation type="journal article" date="2001" name="Lancet">
        <title>Whole genome sequencing of meticillin-resistant Staphylococcus aureus.</title>
        <authorList>
            <person name="Kuroda M."/>
            <person name="Ohta T."/>
            <person name="Uchiyama I."/>
            <person name="Baba T."/>
            <person name="Yuzawa H."/>
            <person name="Kobayashi I."/>
            <person name="Cui L."/>
            <person name="Oguchi A."/>
            <person name="Aoki K."/>
            <person name="Nagai Y."/>
            <person name="Lian J.-Q."/>
            <person name="Ito T."/>
            <person name="Kanamori M."/>
            <person name="Matsumaru H."/>
            <person name="Maruyama A."/>
            <person name="Murakami H."/>
            <person name="Hosoyama A."/>
            <person name="Mizutani-Ui Y."/>
            <person name="Takahashi N.K."/>
            <person name="Sawano T."/>
            <person name="Inoue R."/>
            <person name="Kaito C."/>
            <person name="Sekimizu K."/>
            <person name="Hirakawa H."/>
            <person name="Kuhara S."/>
            <person name="Goto S."/>
            <person name="Yabuzaki J."/>
            <person name="Kanehisa M."/>
            <person name="Yamashita A."/>
            <person name="Oshima K."/>
            <person name="Furuya K."/>
            <person name="Yoshino C."/>
            <person name="Shiba T."/>
            <person name="Hattori M."/>
            <person name="Ogasawara N."/>
            <person name="Hayashi H."/>
            <person name="Hiramatsu K."/>
        </authorList>
    </citation>
    <scope>NUCLEOTIDE SEQUENCE [LARGE SCALE GENOMIC DNA]</scope>
    <source>
        <strain>N315</strain>
    </source>
</reference>
<reference key="2">
    <citation type="submission" date="2007-10" db="UniProtKB">
        <title>Shotgun proteomic analysis of total and membrane protein extracts of S. aureus strain N315.</title>
        <authorList>
            <person name="Vaezzadeh A.R."/>
            <person name="Deshusses J."/>
            <person name="Lescuyer P."/>
            <person name="Hochstrasser D.F."/>
        </authorList>
    </citation>
    <scope>IDENTIFICATION BY MASS SPECTROMETRY [LARGE SCALE ANALYSIS]</scope>
    <source>
        <strain>N315</strain>
    </source>
</reference>
<proteinExistence type="evidence at protein level"/>
<gene>
    <name evidence="1" type="primary">dinG</name>
    <name type="ordered locus">SA1288</name>
</gene>